<feature type="signal peptide" evidence="1">
    <location>
        <begin position="1"/>
        <end position="24"/>
    </location>
</feature>
<feature type="propeptide" id="PRO_0000372330" evidence="1">
    <location>
        <begin position="25"/>
        <end position="36"/>
    </location>
</feature>
<feature type="peptide" id="PRO_0000372331" description="VVGQQDFLRF-amide" evidence="1">
    <location>
        <begin position="38"/>
        <end position="47"/>
    </location>
</feature>
<feature type="propeptide" id="PRO_0000372332" evidence="1">
    <location>
        <begin position="50"/>
        <end position="83"/>
    </location>
</feature>
<feature type="modified residue" description="Phenylalanine amide" evidence="1">
    <location>
        <position position="47"/>
    </location>
</feature>
<gene>
    <name type="primary">flp-23</name>
    <name type="ORF">F22B7.2</name>
</gene>
<sequence length="83" mass="8938">MLLPKISILLYILVVLQETAAVRGALFRSGRAVPFERVVGQQDFLRFGRAGMASGVGGGSEGGPDDVKNSYIRVNGEPEIVYQ</sequence>
<protein>
    <recommendedName>
        <fullName>FMRFamide-like neuropeptide 23</fullName>
    </recommendedName>
    <component>
        <recommendedName>
            <fullName>VVGQQDFLRF-amide</fullName>
        </recommendedName>
    </component>
</protein>
<organism>
    <name type="scientific">Caenorhabditis elegans</name>
    <dbReference type="NCBI Taxonomy" id="6239"/>
    <lineage>
        <taxon>Eukaryota</taxon>
        <taxon>Metazoa</taxon>
        <taxon>Ecdysozoa</taxon>
        <taxon>Nematoda</taxon>
        <taxon>Chromadorea</taxon>
        <taxon>Rhabditida</taxon>
        <taxon>Rhabditina</taxon>
        <taxon>Rhabditomorpha</taxon>
        <taxon>Rhabditoidea</taxon>
        <taxon>Rhabditidae</taxon>
        <taxon>Peloderinae</taxon>
        <taxon>Caenorhabditis</taxon>
    </lineage>
</organism>
<reference key="1">
    <citation type="journal article" date="2005" name="Int. J. Parasitol.">
        <title>Analysis of FMRFamide-like peptide (FLP) diversity in phylum Nematoda.</title>
        <authorList>
            <person name="McVeigh P."/>
            <person name="Leech S."/>
            <person name="Mair G.R."/>
            <person name="Marks N.J."/>
            <person name="Geary T.G."/>
            <person name="Maule A.G."/>
        </authorList>
    </citation>
    <scope>NUCLEOTIDE SEQUENCE [MRNA]</scope>
    <source>
        <strain>Bristol N2</strain>
    </source>
</reference>
<reference key="2">
    <citation type="journal article" date="1994" name="Nature">
        <title>2.2 Mb of contiguous nucleotide sequence from chromosome III of C. elegans.</title>
        <authorList>
            <person name="Wilson R."/>
            <person name="Ainscough R."/>
            <person name="Anderson K."/>
            <person name="Baynes C."/>
            <person name="Berks M."/>
            <person name="Bonfield J."/>
            <person name="Burton J."/>
            <person name="Connell M."/>
            <person name="Copsey T."/>
            <person name="Cooper J."/>
            <person name="Coulson A."/>
            <person name="Craxton M."/>
            <person name="Dear S."/>
            <person name="Du Z."/>
            <person name="Durbin R."/>
            <person name="Favello A."/>
            <person name="Fraser A."/>
            <person name="Fulton L."/>
            <person name="Gardner A."/>
            <person name="Green P."/>
            <person name="Hawkins T."/>
            <person name="Hillier L."/>
            <person name="Jier M."/>
            <person name="Johnston L."/>
            <person name="Jones M."/>
            <person name="Kershaw J."/>
            <person name="Kirsten J."/>
            <person name="Laisster N."/>
            <person name="Latreille P."/>
            <person name="Lightning J."/>
            <person name="Lloyd C."/>
            <person name="Mortimore B."/>
            <person name="O'Callaghan M."/>
            <person name="Parsons J."/>
            <person name="Percy C."/>
            <person name="Rifken L."/>
            <person name="Roopra A."/>
            <person name="Saunders D."/>
            <person name="Shownkeen R."/>
            <person name="Sims M."/>
            <person name="Smaldon N."/>
            <person name="Smith A."/>
            <person name="Smith M."/>
            <person name="Sonnhammer E."/>
            <person name="Staden R."/>
            <person name="Sulston J."/>
            <person name="Thierry-Mieg J."/>
            <person name="Thomas K."/>
            <person name="Vaudin M."/>
            <person name="Vaughan K."/>
            <person name="Waterston R."/>
            <person name="Watson A."/>
            <person name="Weinstock L."/>
            <person name="Wilkinson-Sproat J."/>
            <person name="Wohldman P."/>
        </authorList>
    </citation>
    <scope>NUCLEOTIDE SEQUENCE [LARGE SCALE GENOMIC DNA]</scope>
    <source>
        <strain>Bristol N2</strain>
    </source>
</reference>
<reference key="3">
    <citation type="journal article" date="1998" name="Science">
        <title>Genome sequence of the nematode C. elegans: a platform for investigating biology.</title>
        <authorList>
            <consortium name="The C. elegans sequencing consortium"/>
        </authorList>
    </citation>
    <scope>NUCLEOTIDE SEQUENCE [LARGE SCALE GENOMIC DNA]</scope>
    <source>
        <strain>Bristol N2</strain>
    </source>
</reference>
<reference key="4">
    <citation type="journal article" date="2004" name="J. Comp. Neurol.">
        <title>Expression and regulation of an FMRFamide-related neuropeptide gene family in Caenorhabditis elegans.</title>
        <authorList>
            <person name="Kim K."/>
            <person name="Li C."/>
        </authorList>
    </citation>
    <scope>IDENTIFICATION</scope>
</reference>
<reference key="5">
    <citation type="journal article" date="2005" name="J. Neurobiol.">
        <title>Role of a FMRFamide-like family of neuropeptides in the pharyngeal nervous system of Caenorhabditis elegans.</title>
        <authorList>
            <person name="Papaioannou S."/>
            <person name="Marsden D."/>
            <person name="Franks C.J."/>
            <person name="Walker R.J."/>
            <person name="Holden-Dye L."/>
        </authorList>
    </citation>
    <scope>FUNCTION</scope>
</reference>
<keyword id="KW-0027">Amidation</keyword>
<keyword id="KW-0527">Neuropeptide</keyword>
<keyword id="KW-1185">Reference proteome</keyword>
<keyword id="KW-0964">Secreted</keyword>
<keyword id="KW-0732">Signal</keyword>
<evidence type="ECO:0000255" key="1"/>
<evidence type="ECO:0000269" key="2">
    <source>
    </source>
</evidence>
<evidence type="ECO:0000305" key="3"/>
<evidence type="ECO:0000305" key="4">
    <source>
    </source>
</evidence>
<accession>P34405</accession>
<accession>Q4VGN0</accession>
<dbReference type="EMBL" id="AY941160">
    <property type="protein sequence ID" value="AAY18633.1"/>
    <property type="molecule type" value="mRNA"/>
</dbReference>
<dbReference type="EMBL" id="FO080222">
    <property type="protein sequence ID" value="CCD62141.2"/>
    <property type="molecule type" value="Genomic_DNA"/>
</dbReference>
<dbReference type="PIR" id="S44631">
    <property type="entry name" value="S44631"/>
</dbReference>
<dbReference type="RefSeq" id="NP_498907.3">
    <property type="nucleotide sequence ID" value="NM_066506.6"/>
</dbReference>
<dbReference type="BioGRID" id="49596">
    <property type="interactions" value="3"/>
</dbReference>
<dbReference type="FunCoup" id="P34405">
    <property type="interactions" value="105"/>
</dbReference>
<dbReference type="EnsemblMetazoa" id="F22B7.2a.1">
    <property type="protein sequence ID" value="F22B7.2a.1"/>
    <property type="gene ID" value="WBGene00017693"/>
</dbReference>
<dbReference type="GeneID" id="184812"/>
<dbReference type="KEGG" id="cel:CELE_F22B7.2"/>
<dbReference type="UCSC" id="F22B7.2">
    <property type="organism name" value="c. elegans"/>
</dbReference>
<dbReference type="AGR" id="WB:WBGene00017693"/>
<dbReference type="CTD" id="184812"/>
<dbReference type="WormBase" id="F22B7.2a">
    <property type="protein sequence ID" value="CE47863"/>
    <property type="gene ID" value="WBGene00017693"/>
    <property type="gene designation" value="flp-23"/>
</dbReference>
<dbReference type="eggNOG" id="ENOG502TI03">
    <property type="taxonomic scope" value="Eukaryota"/>
</dbReference>
<dbReference type="HOGENOM" id="CLU_2544644_0_0_1"/>
<dbReference type="InParanoid" id="P34405"/>
<dbReference type="OrthoDB" id="5806922at2759"/>
<dbReference type="PRO" id="PR:P34405"/>
<dbReference type="Proteomes" id="UP000001940">
    <property type="component" value="Chromosome III"/>
</dbReference>
<dbReference type="Bgee" id="WBGene00017693">
    <property type="expression patterns" value="Expressed in multicellular organism and 1 other cell type or tissue"/>
</dbReference>
<dbReference type="GO" id="GO:0005576">
    <property type="term" value="C:extracellular region"/>
    <property type="evidence" value="ECO:0007669"/>
    <property type="project" value="UniProtKB-SubCell"/>
</dbReference>
<dbReference type="GO" id="GO:0007218">
    <property type="term" value="P:neuropeptide signaling pathway"/>
    <property type="evidence" value="ECO:0007669"/>
    <property type="project" value="UniProtKB-KW"/>
</dbReference>
<proteinExistence type="evidence at transcript level"/>
<comment type="function">
    <text evidence="2">FMRFamides and FMRFamide-like peptides are neuropeptides.</text>
</comment>
<comment type="subcellular location">
    <subcellularLocation>
        <location>Secreted</location>
    </subcellularLocation>
</comment>
<comment type="tissue specificity">
    <text>Each flp gene is expressed in a distinct set of neurons.</text>
</comment>
<comment type="similarity">
    <text evidence="3">Belongs to the FARP (FMRFamide related peptide) family.</text>
</comment>
<comment type="caution">
    <text evidence="4">The protein was originally predicted to include a TKFQDFLRF-amide peptide, although TKFQDFLRF-amide has no effect on the activity of dissected pharyngeal myogenic muscle system.</text>
</comment>
<name>FLP23_CAEEL</name>